<protein>
    <recommendedName>
        <fullName evidence="1">Galactokinase</fullName>
        <ecNumber evidence="1">2.7.1.6</ecNumber>
    </recommendedName>
    <alternativeName>
        <fullName evidence="1">Galactose kinase</fullName>
    </alternativeName>
</protein>
<keyword id="KW-0067">ATP-binding</keyword>
<keyword id="KW-0119">Carbohydrate metabolism</keyword>
<keyword id="KW-0963">Cytoplasm</keyword>
<keyword id="KW-0299">Galactose metabolism</keyword>
<keyword id="KW-0418">Kinase</keyword>
<keyword id="KW-0460">Magnesium</keyword>
<keyword id="KW-0479">Metal-binding</keyword>
<keyword id="KW-0547">Nucleotide-binding</keyword>
<keyword id="KW-1185">Reference proteome</keyword>
<keyword id="KW-0808">Transferase</keyword>
<feature type="chain" id="PRO_0000184604" description="Galactokinase">
    <location>
        <begin position="1"/>
        <end position="389"/>
    </location>
</feature>
<feature type="active site" description="Proton acceptor" evidence="1">
    <location>
        <position position="175"/>
    </location>
</feature>
<feature type="binding site" evidence="1">
    <location>
        <begin position="34"/>
        <end position="37"/>
    </location>
    <ligand>
        <name>substrate</name>
    </ligand>
</feature>
<feature type="binding site" evidence="1">
    <location>
        <position position="68"/>
    </location>
    <ligand>
        <name>ATP</name>
        <dbReference type="ChEBI" id="CHEBI:30616"/>
    </ligand>
</feature>
<feature type="binding site" evidence="1">
    <location>
        <begin position="125"/>
        <end position="131"/>
    </location>
    <ligand>
        <name>ATP</name>
        <dbReference type="ChEBI" id="CHEBI:30616"/>
    </ligand>
</feature>
<feature type="binding site" evidence="1">
    <location>
        <position position="131"/>
    </location>
    <ligand>
        <name>Mg(2+)</name>
        <dbReference type="ChEBI" id="CHEBI:18420"/>
    </ligand>
</feature>
<feature type="binding site" evidence="1">
    <location>
        <position position="163"/>
    </location>
    <ligand>
        <name>Mg(2+)</name>
        <dbReference type="ChEBI" id="CHEBI:18420"/>
    </ligand>
</feature>
<feature type="binding site" evidence="1">
    <location>
        <position position="225"/>
    </location>
    <ligand>
        <name>substrate</name>
    </ligand>
</feature>
<feature type="site" description="Transition state stabilizer" evidence="1">
    <location>
        <position position="28"/>
    </location>
</feature>
<sequence>MDIINMLDEKFKNIFKRHYENVFFSPGRVNLIGEHTDYNGGHVFPCALTIGTYGLVARRNDNKVLAYSLNFDNLGVIEFSLDDLKKCKKDDWANYVKGVIDTFNKHGHNIENGFEILFYGSIPNGSGLSSSASIEVLTGIILNDLFKLNINMVEIVKMCQEAENSFIGVNCGIMDQFSIGMGKKDCAILLDCSTLEYSYSKLNMTGYKIVIANTNKKRGLADSKYNERRSECEAALKELQKVKNINSLGELTEAEFEELKDIISDPVKLRRARHAVYENQRTLKAVVSLNNNDLKTFGKLMNESHISLRDDYEVTGIELDTLVSLALESKGVIGSRMTGAGFGGCTVSIVKEDYVDEFIESIKAKYTEKIGYEPSFYIVNIADGAKKIN</sequence>
<comment type="function">
    <text evidence="1">Catalyzes the transfer of the gamma-phosphate of ATP to D-galactose to form alpha-D-galactose-1-phosphate (Gal-1-P).</text>
</comment>
<comment type="catalytic activity">
    <reaction evidence="1">
        <text>alpha-D-galactose + ATP = alpha-D-galactose 1-phosphate + ADP + H(+)</text>
        <dbReference type="Rhea" id="RHEA:13553"/>
        <dbReference type="ChEBI" id="CHEBI:15378"/>
        <dbReference type="ChEBI" id="CHEBI:28061"/>
        <dbReference type="ChEBI" id="CHEBI:30616"/>
        <dbReference type="ChEBI" id="CHEBI:58336"/>
        <dbReference type="ChEBI" id="CHEBI:456216"/>
        <dbReference type="EC" id="2.7.1.6"/>
    </reaction>
</comment>
<comment type="pathway">
    <text evidence="1">Carbohydrate metabolism; galactose metabolism.</text>
</comment>
<comment type="subcellular location">
    <subcellularLocation>
        <location evidence="1">Cytoplasm</location>
    </subcellularLocation>
</comment>
<comment type="similarity">
    <text evidence="1">Belongs to the GHMP kinase family. GalK subfamily.</text>
</comment>
<name>GAL1_CLOAB</name>
<dbReference type="EC" id="2.7.1.6" evidence="1"/>
<dbReference type="EMBL" id="AE001437">
    <property type="protein sequence ID" value="AAK80901.1"/>
    <property type="molecule type" value="Genomic_DNA"/>
</dbReference>
<dbReference type="PIR" id="B97264">
    <property type="entry name" value="B97264"/>
</dbReference>
<dbReference type="RefSeq" id="NP_349561.1">
    <property type="nucleotide sequence ID" value="NC_003030.1"/>
</dbReference>
<dbReference type="RefSeq" id="WP_010966242.1">
    <property type="nucleotide sequence ID" value="NC_003030.1"/>
</dbReference>
<dbReference type="SMR" id="Q97EZ6"/>
<dbReference type="STRING" id="272562.CA_C2959"/>
<dbReference type="KEGG" id="cac:CA_C2959"/>
<dbReference type="PATRIC" id="fig|272562.8.peg.3143"/>
<dbReference type="eggNOG" id="COG0153">
    <property type="taxonomic scope" value="Bacteria"/>
</dbReference>
<dbReference type="HOGENOM" id="CLU_017814_2_1_9"/>
<dbReference type="OrthoDB" id="250531at2"/>
<dbReference type="UniPathway" id="UPA00214"/>
<dbReference type="Proteomes" id="UP000000814">
    <property type="component" value="Chromosome"/>
</dbReference>
<dbReference type="GO" id="GO:0005829">
    <property type="term" value="C:cytosol"/>
    <property type="evidence" value="ECO:0007669"/>
    <property type="project" value="TreeGrafter"/>
</dbReference>
<dbReference type="GO" id="GO:0005524">
    <property type="term" value="F:ATP binding"/>
    <property type="evidence" value="ECO:0007669"/>
    <property type="project" value="UniProtKB-UniRule"/>
</dbReference>
<dbReference type="GO" id="GO:0004335">
    <property type="term" value="F:galactokinase activity"/>
    <property type="evidence" value="ECO:0007669"/>
    <property type="project" value="UniProtKB-UniRule"/>
</dbReference>
<dbReference type="GO" id="GO:0000287">
    <property type="term" value="F:magnesium ion binding"/>
    <property type="evidence" value="ECO:0007669"/>
    <property type="project" value="UniProtKB-UniRule"/>
</dbReference>
<dbReference type="GO" id="GO:0006012">
    <property type="term" value="P:galactose metabolic process"/>
    <property type="evidence" value="ECO:0007669"/>
    <property type="project" value="UniProtKB-UniRule"/>
</dbReference>
<dbReference type="FunFam" id="3.30.230.10:FF:000017">
    <property type="entry name" value="Galactokinase"/>
    <property type="match status" value="1"/>
</dbReference>
<dbReference type="FunFam" id="3.30.70.890:FF:000001">
    <property type="entry name" value="Galactokinase"/>
    <property type="match status" value="1"/>
</dbReference>
<dbReference type="Gene3D" id="3.30.230.10">
    <property type="match status" value="1"/>
</dbReference>
<dbReference type="Gene3D" id="3.30.70.890">
    <property type="entry name" value="GHMP kinase, C-terminal domain"/>
    <property type="match status" value="1"/>
</dbReference>
<dbReference type="HAMAP" id="MF_00246">
    <property type="entry name" value="Galactokinase"/>
    <property type="match status" value="1"/>
</dbReference>
<dbReference type="InterPro" id="IPR000705">
    <property type="entry name" value="Galactokinase"/>
</dbReference>
<dbReference type="InterPro" id="IPR022963">
    <property type="entry name" value="Galactokinase_bac"/>
</dbReference>
<dbReference type="InterPro" id="IPR019741">
    <property type="entry name" value="Galactokinase_CS"/>
</dbReference>
<dbReference type="InterPro" id="IPR019539">
    <property type="entry name" value="GalKase_N"/>
</dbReference>
<dbReference type="InterPro" id="IPR013750">
    <property type="entry name" value="GHMP_kinase_C_dom"/>
</dbReference>
<dbReference type="InterPro" id="IPR036554">
    <property type="entry name" value="GHMP_kinase_C_sf"/>
</dbReference>
<dbReference type="InterPro" id="IPR006204">
    <property type="entry name" value="GHMP_kinase_N_dom"/>
</dbReference>
<dbReference type="InterPro" id="IPR006203">
    <property type="entry name" value="GHMP_knse_ATP-bd_CS"/>
</dbReference>
<dbReference type="InterPro" id="IPR006206">
    <property type="entry name" value="Mevalonate/galactokinase"/>
</dbReference>
<dbReference type="InterPro" id="IPR020568">
    <property type="entry name" value="Ribosomal_Su5_D2-typ_SF"/>
</dbReference>
<dbReference type="InterPro" id="IPR014721">
    <property type="entry name" value="Ribsml_uS5_D2-typ_fold_subgr"/>
</dbReference>
<dbReference type="NCBIfam" id="TIGR00131">
    <property type="entry name" value="gal_kin"/>
    <property type="match status" value="1"/>
</dbReference>
<dbReference type="NCBIfam" id="NF003705">
    <property type="entry name" value="PRK05322.1"/>
    <property type="match status" value="1"/>
</dbReference>
<dbReference type="PANTHER" id="PTHR10457:SF7">
    <property type="entry name" value="GALACTOKINASE-RELATED"/>
    <property type="match status" value="1"/>
</dbReference>
<dbReference type="PANTHER" id="PTHR10457">
    <property type="entry name" value="MEVALONATE KINASE/GALACTOKINASE"/>
    <property type="match status" value="1"/>
</dbReference>
<dbReference type="Pfam" id="PF10509">
    <property type="entry name" value="GalKase_gal_bdg"/>
    <property type="match status" value="1"/>
</dbReference>
<dbReference type="Pfam" id="PF08544">
    <property type="entry name" value="GHMP_kinases_C"/>
    <property type="match status" value="1"/>
</dbReference>
<dbReference type="Pfam" id="PF00288">
    <property type="entry name" value="GHMP_kinases_N"/>
    <property type="match status" value="1"/>
</dbReference>
<dbReference type="PIRSF" id="PIRSF000530">
    <property type="entry name" value="Galactokinase"/>
    <property type="match status" value="1"/>
</dbReference>
<dbReference type="PRINTS" id="PR00473">
    <property type="entry name" value="GALCTOKINASE"/>
</dbReference>
<dbReference type="PRINTS" id="PR00959">
    <property type="entry name" value="MEVGALKINASE"/>
</dbReference>
<dbReference type="SUPFAM" id="SSF55060">
    <property type="entry name" value="GHMP Kinase, C-terminal domain"/>
    <property type="match status" value="1"/>
</dbReference>
<dbReference type="SUPFAM" id="SSF54211">
    <property type="entry name" value="Ribosomal protein S5 domain 2-like"/>
    <property type="match status" value="1"/>
</dbReference>
<dbReference type="PROSITE" id="PS00106">
    <property type="entry name" value="GALACTOKINASE"/>
    <property type="match status" value="1"/>
</dbReference>
<dbReference type="PROSITE" id="PS00627">
    <property type="entry name" value="GHMP_KINASES_ATP"/>
    <property type="match status" value="1"/>
</dbReference>
<reference key="1">
    <citation type="journal article" date="2001" name="J. Bacteriol.">
        <title>Genome sequence and comparative analysis of the solvent-producing bacterium Clostridium acetobutylicum.</title>
        <authorList>
            <person name="Noelling J."/>
            <person name="Breton G."/>
            <person name="Omelchenko M.V."/>
            <person name="Makarova K.S."/>
            <person name="Zeng Q."/>
            <person name="Gibson R."/>
            <person name="Lee H.M."/>
            <person name="Dubois J."/>
            <person name="Qiu D."/>
            <person name="Hitti J."/>
            <person name="Wolf Y.I."/>
            <person name="Tatusov R.L."/>
            <person name="Sabathe F."/>
            <person name="Doucette-Stamm L.A."/>
            <person name="Soucaille P."/>
            <person name="Daly M.J."/>
            <person name="Bennett G.N."/>
            <person name="Koonin E.V."/>
            <person name="Smith D.R."/>
        </authorList>
    </citation>
    <scope>NUCLEOTIDE SEQUENCE [LARGE SCALE GENOMIC DNA]</scope>
    <source>
        <strain>ATCC 824 / DSM 792 / JCM 1419 / IAM 19013 / LMG 5710 / NBRC 13948 / NRRL B-527 / VKM B-1787 / 2291 / W</strain>
    </source>
</reference>
<gene>
    <name evidence="1" type="primary">galK</name>
    <name type="ordered locus">CA_C2959</name>
</gene>
<accession>Q97EZ6</accession>
<evidence type="ECO:0000255" key="1">
    <source>
        <dbReference type="HAMAP-Rule" id="MF_00246"/>
    </source>
</evidence>
<organism>
    <name type="scientific">Clostridium acetobutylicum (strain ATCC 824 / DSM 792 / JCM 1419 / IAM 19013 / LMG 5710 / NBRC 13948 / NRRL B-527 / VKM B-1787 / 2291 / W)</name>
    <dbReference type="NCBI Taxonomy" id="272562"/>
    <lineage>
        <taxon>Bacteria</taxon>
        <taxon>Bacillati</taxon>
        <taxon>Bacillota</taxon>
        <taxon>Clostridia</taxon>
        <taxon>Eubacteriales</taxon>
        <taxon>Clostridiaceae</taxon>
        <taxon>Clostridium</taxon>
    </lineage>
</organism>
<proteinExistence type="inferred from homology"/>